<comment type="catalytic activity">
    <reaction>
        <text>L-seryl-[protein] + ATP = O-phospho-L-seryl-[protein] + ADP + H(+)</text>
        <dbReference type="Rhea" id="RHEA:17989"/>
        <dbReference type="Rhea" id="RHEA-COMP:9863"/>
        <dbReference type="Rhea" id="RHEA-COMP:11604"/>
        <dbReference type="ChEBI" id="CHEBI:15378"/>
        <dbReference type="ChEBI" id="CHEBI:29999"/>
        <dbReference type="ChEBI" id="CHEBI:30616"/>
        <dbReference type="ChEBI" id="CHEBI:83421"/>
        <dbReference type="ChEBI" id="CHEBI:456216"/>
        <dbReference type="EC" id="2.7.11.1"/>
    </reaction>
</comment>
<comment type="catalytic activity">
    <reaction>
        <text>L-threonyl-[protein] + ATP = O-phospho-L-threonyl-[protein] + ADP + H(+)</text>
        <dbReference type="Rhea" id="RHEA:46608"/>
        <dbReference type="Rhea" id="RHEA-COMP:11060"/>
        <dbReference type="Rhea" id="RHEA-COMP:11605"/>
        <dbReference type="ChEBI" id="CHEBI:15378"/>
        <dbReference type="ChEBI" id="CHEBI:30013"/>
        <dbReference type="ChEBI" id="CHEBI:30616"/>
        <dbReference type="ChEBI" id="CHEBI:61977"/>
        <dbReference type="ChEBI" id="CHEBI:456216"/>
        <dbReference type="EC" id="2.7.11.1"/>
    </reaction>
</comment>
<comment type="subcellular location">
    <subcellularLocation>
        <location evidence="9">Cell membrane</location>
        <topology evidence="9">Single-pass type I membrane protein</topology>
    </subcellularLocation>
</comment>
<comment type="developmental stage">
    <text evidence="8">Decreased expression shortly before the onset of abscission.</text>
</comment>
<comment type="similarity">
    <text evidence="5">Belongs to the protein kinase superfamily. Ser/Thr protein kinase family.</text>
</comment>
<accession>Q9SGP2</accession>
<keyword id="KW-0002">3D-structure</keyword>
<keyword id="KW-0067">ATP-binding</keyword>
<keyword id="KW-1003">Cell membrane</keyword>
<keyword id="KW-0325">Glycoprotein</keyword>
<keyword id="KW-0418">Kinase</keyword>
<keyword id="KW-0433">Leucine-rich repeat</keyword>
<keyword id="KW-0472">Membrane</keyword>
<keyword id="KW-0547">Nucleotide-binding</keyword>
<keyword id="KW-0597">Phosphoprotein</keyword>
<keyword id="KW-1185">Reference proteome</keyword>
<keyword id="KW-0677">Repeat</keyword>
<keyword id="KW-0723">Serine/threonine-protein kinase</keyword>
<keyword id="KW-0732">Signal</keyword>
<keyword id="KW-0808">Transferase</keyword>
<keyword id="KW-0812">Transmembrane</keyword>
<keyword id="KW-1133">Transmembrane helix</keyword>
<reference key="1">
    <citation type="journal article" date="2000" name="Nature">
        <title>Sequence and analysis of chromosome 1 of the plant Arabidopsis thaliana.</title>
        <authorList>
            <person name="Theologis A."/>
            <person name="Ecker J.R."/>
            <person name="Palm C.J."/>
            <person name="Federspiel N.A."/>
            <person name="Kaul S."/>
            <person name="White O."/>
            <person name="Alonso J."/>
            <person name="Altafi H."/>
            <person name="Araujo R."/>
            <person name="Bowman C.L."/>
            <person name="Brooks S.Y."/>
            <person name="Buehler E."/>
            <person name="Chan A."/>
            <person name="Chao Q."/>
            <person name="Chen H."/>
            <person name="Cheuk R.F."/>
            <person name="Chin C.W."/>
            <person name="Chung M.K."/>
            <person name="Conn L."/>
            <person name="Conway A.B."/>
            <person name="Conway A.R."/>
            <person name="Creasy T.H."/>
            <person name="Dewar K."/>
            <person name="Dunn P."/>
            <person name="Etgu P."/>
            <person name="Feldblyum T.V."/>
            <person name="Feng J.-D."/>
            <person name="Fong B."/>
            <person name="Fujii C.Y."/>
            <person name="Gill J.E."/>
            <person name="Goldsmith A.D."/>
            <person name="Haas B."/>
            <person name="Hansen N.F."/>
            <person name="Hughes B."/>
            <person name="Huizar L."/>
            <person name="Hunter J.L."/>
            <person name="Jenkins J."/>
            <person name="Johnson-Hopson C."/>
            <person name="Khan S."/>
            <person name="Khaykin E."/>
            <person name="Kim C.J."/>
            <person name="Koo H.L."/>
            <person name="Kremenetskaia I."/>
            <person name="Kurtz D.B."/>
            <person name="Kwan A."/>
            <person name="Lam B."/>
            <person name="Langin-Hooper S."/>
            <person name="Lee A."/>
            <person name="Lee J.M."/>
            <person name="Lenz C.A."/>
            <person name="Li J.H."/>
            <person name="Li Y.-P."/>
            <person name="Lin X."/>
            <person name="Liu S.X."/>
            <person name="Liu Z.A."/>
            <person name="Luros J.S."/>
            <person name="Maiti R."/>
            <person name="Marziali A."/>
            <person name="Militscher J."/>
            <person name="Miranda M."/>
            <person name="Nguyen M."/>
            <person name="Nierman W.C."/>
            <person name="Osborne B.I."/>
            <person name="Pai G."/>
            <person name="Peterson J."/>
            <person name="Pham P.K."/>
            <person name="Rizzo M."/>
            <person name="Rooney T."/>
            <person name="Rowley D."/>
            <person name="Sakano H."/>
            <person name="Salzberg S.L."/>
            <person name="Schwartz J.R."/>
            <person name="Shinn P."/>
            <person name="Southwick A.M."/>
            <person name="Sun H."/>
            <person name="Tallon L.J."/>
            <person name="Tambunga G."/>
            <person name="Toriumi M.J."/>
            <person name="Town C.D."/>
            <person name="Utterback T."/>
            <person name="Van Aken S."/>
            <person name="Vaysberg M."/>
            <person name="Vysotskaia V.S."/>
            <person name="Walker M."/>
            <person name="Wu D."/>
            <person name="Yu G."/>
            <person name="Fraser C.M."/>
            <person name="Venter J.C."/>
            <person name="Davis R.W."/>
        </authorList>
    </citation>
    <scope>NUCLEOTIDE SEQUENCE [LARGE SCALE GENOMIC DNA]</scope>
    <source>
        <strain>cv. Columbia</strain>
    </source>
</reference>
<reference key="2">
    <citation type="journal article" date="2017" name="Plant J.">
        <title>Araport11: a complete reannotation of the Arabidopsis thaliana reference genome.</title>
        <authorList>
            <person name="Cheng C.Y."/>
            <person name="Krishnakumar V."/>
            <person name="Chan A.P."/>
            <person name="Thibaud-Nissen F."/>
            <person name="Schobel S."/>
            <person name="Town C.D."/>
        </authorList>
    </citation>
    <scope>GENOME REANNOTATION</scope>
    <source>
        <strain>cv. Columbia</strain>
    </source>
</reference>
<reference key="3">
    <citation type="journal article" date="2003" name="Science">
        <title>Empirical analysis of transcriptional activity in the Arabidopsis genome.</title>
        <authorList>
            <person name="Yamada K."/>
            <person name="Lim J."/>
            <person name="Dale J.M."/>
            <person name="Chen H."/>
            <person name="Shinn P."/>
            <person name="Palm C.J."/>
            <person name="Southwick A.M."/>
            <person name="Wu H.C."/>
            <person name="Kim C.J."/>
            <person name="Nguyen M."/>
            <person name="Pham P.K."/>
            <person name="Cheuk R.F."/>
            <person name="Karlin-Newmann G."/>
            <person name="Liu S.X."/>
            <person name="Lam B."/>
            <person name="Sakano H."/>
            <person name="Wu T."/>
            <person name="Yu G."/>
            <person name="Miranda M."/>
            <person name="Quach H.L."/>
            <person name="Tripp M."/>
            <person name="Chang C.H."/>
            <person name="Lee J.M."/>
            <person name="Toriumi M.J."/>
            <person name="Chan M.M."/>
            <person name="Tang C.C."/>
            <person name="Onodera C.S."/>
            <person name="Deng J.M."/>
            <person name="Akiyama K."/>
            <person name="Ansari Y."/>
            <person name="Arakawa T."/>
            <person name="Banh J."/>
            <person name="Banno F."/>
            <person name="Bowser L."/>
            <person name="Brooks S.Y."/>
            <person name="Carninci P."/>
            <person name="Chao Q."/>
            <person name="Choy N."/>
            <person name="Enju A."/>
            <person name="Goldsmith A.D."/>
            <person name="Gurjal M."/>
            <person name="Hansen N.F."/>
            <person name="Hayashizaki Y."/>
            <person name="Johnson-Hopson C."/>
            <person name="Hsuan V.W."/>
            <person name="Iida K."/>
            <person name="Karnes M."/>
            <person name="Khan S."/>
            <person name="Koesema E."/>
            <person name="Ishida J."/>
            <person name="Jiang P.X."/>
            <person name="Jones T."/>
            <person name="Kawai J."/>
            <person name="Kamiya A."/>
            <person name="Meyers C."/>
            <person name="Nakajima M."/>
            <person name="Narusaka M."/>
            <person name="Seki M."/>
            <person name="Sakurai T."/>
            <person name="Satou M."/>
            <person name="Tamse R."/>
            <person name="Vaysberg M."/>
            <person name="Wallender E.K."/>
            <person name="Wong C."/>
            <person name="Yamamura Y."/>
            <person name="Yuan S."/>
            <person name="Shinozaki K."/>
            <person name="Davis R.W."/>
            <person name="Theologis A."/>
            <person name="Ecker J.R."/>
        </authorList>
    </citation>
    <scope>NUCLEOTIDE SEQUENCE [LARGE SCALE MRNA]</scope>
    <source>
        <strain>cv. Columbia</strain>
    </source>
</reference>
<reference key="4">
    <citation type="submission" date="2006-07" db="EMBL/GenBank/DDBJ databases">
        <title>Large-scale analysis of RIKEN Arabidopsis full-length (RAFL) cDNAs.</title>
        <authorList>
            <person name="Totoki Y."/>
            <person name="Seki M."/>
            <person name="Ishida J."/>
            <person name="Nakajima M."/>
            <person name="Enju A."/>
            <person name="Morosawa T."/>
            <person name="Kamiya A."/>
            <person name="Narusaka M."/>
            <person name="Shin-i T."/>
            <person name="Nakagawa M."/>
            <person name="Sakamoto N."/>
            <person name="Oishi K."/>
            <person name="Kohara Y."/>
            <person name="Kobayashi M."/>
            <person name="Toyoda A."/>
            <person name="Sakaki Y."/>
            <person name="Sakurai T."/>
            <person name="Iida K."/>
            <person name="Akiyama K."/>
            <person name="Satou M."/>
            <person name="Toyoda T."/>
            <person name="Konagaya A."/>
            <person name="Carninci P."/>
            <person name="Kawai J."/>
            <person name="Hayashizaki Y."/>
            <person name="Shinozaki K."/>
        </authorList>
    </citation>
    <scope>NUCLEOTIDE SEQUENCE [LARGE SCALE MRNA]</scope>
</reference>
<reference key="5">
    <citation type="journal article" date="2010" name="BMC Genomics">
        <title>Genome-wide cloning and sequence analysis of leucine-rich repeat receptor-like protein kinase genes in Arabidopsis thaliana.</title>
        <authorList>
            <person name="Gou X."/>
            <person name="He K."/>
            <person name="Yang H."/>
            <person name="Yuan T."/>
            <person name="Lin H."/>
            <person name="Clouse S.D."/>
            <person name="Li J."/>
        </authorList>
    </citation>
    <scope>NUCLEOTIDE SEQUENCE [LARGE SCALE MRNA]</scope>
</reference>
<reference key="6">
    <citation type="journal article" date="2008" name="Plant Cell">
        <title>The EPIP peptide of INFLORESCENCE DEFICIENT IN ABSCISSION is sufficient to induce abscission in arabidopsis through the receptor-like kinases HAESA and HAESA-LIKE2.</title>
        <authorList>
            <person name="Stenvik G.-E."/>
            <person name="Tandstad N.M."/>
            <person name="Guo Y."/>
            <person name="Shi C.-L."/>
            <person name="Kristiansen W."/>
            <person name="Holmgren A."/>
            <person name="Clark S.E."/>
            <person name="Aalen R.B."/>
            <person name="Butenko M.A."/>
        </authorList>
    </citation>
    <scope>IDENTIFICATION</scope>
    <scope>DEVELOPMENTAL STAGE</scope>
</reference>
<gene>
    <name type="primary">HSL1</name>
    <name type="ordered locus">At1g28440</name>
    <name type="ORF">F3M18.12</name>
</gene>
<evidence type="ECO:0000250" key="1">
    <source>
        <dbReference type="UniProtKB" id="C0LGT6"/>
    </source>
</evidence>
<evidence type="ECO:0000250" key="2">
    <source>
        <dbReference type="UniProtKB" id="O22476"/>
    </source>
</evidence>
<evidence type="ECO:0000250" key="3">
    <source>
        <dbReference type="UniProtKB" id="Q9M0G7"/>
    </source>
</evidence>
<evidence type="ECO:0000255" key="4"/>
<evidence type="ECO:0000255" key="5">
    <source>
        <dbReference type="PROSITE-ProRule" id="PRU00159"/>
    </source>
</evidence>
<evidence type="ECO:0000255" key="6">
    <source>
        <dbReference type="PROSITE-ProRule" id="PRU10027"/>
    </source>
</evidence>
<evidence type="ECO:0000256" key="7">
    <source>
        <dbReference type="SAM" id="MobiDB-lite"/>
    </source>
</evidence>
<evidence type="ECO:0000269" key="8">
    <source>
    </source>
</evidence>
<evidence type="ECO:0000305" key="9"/>
<sequence length="996" mass="108929">MYLLFLFLLFPTVFSLNQDGFILQQVKLSLDDPDSYLSSWNSNDASPCRWSGVSCAGDFSSVTSVDLSSANLAGPFPSVICRLSNLAHLSLYNNSINSTLPLNIAACKSLQTLDLSQNLLTGELPQTLADIPTLVHLDLTGNNFSGDIPASFGKFENLEVLSLVYNLLDGTIPPFLGNISTLKMLNLSYNPFSPSRIPPEFGNLTNLEVMWLTECHLVGQIPDSLGQLSKLVDLDLALNDLVGHIPPSLGGLTNVVQIELYNNSLTGEIPPELGNLKSLRLLDASMNQLTGKIPDELCRVPLESLNLYENNLEGELPASIALSPNLYEIRIFGNRLTGGLPKDLGLNSPLRWLDVSENEFSGDLPADLCAKGELEELLIIHNSFSGVIPESLADCRSLTRIRLAYNRFSGSVPTGFWGLPHVNLLELVNNSFSGEISKSIGGASNLSLLILSNNEFTGSLPEEIGSLDNLNQLSASGNKFSGSLPDSLMSLGELGTLDLHGNQFSGELTSGIKSWKKLNELNLADNEFTGKIPDEIGSLSVLNYLDLSGNMFSGKIPVSLQSLKLNQLNLSYNRLSGDLPPSLAKDMYKNSFIGNPGLCGDIKGLCGSENEAKKRGYVWLLRSIFVLAAMVLLAGVAWFYFKYRTFKKARAMERSKWTLMSFHKLGFSEHEILESLDEDNVIGAGASGKVYKVVLTNGETVAVKRLWTGSVKETGDCDPEKGYKPGVQDEAFEAEVETLGKIRHKNIVKLWCCCSTRDCKLLVYEYMPNGSLGDLLHSSKGGMLGWQTRFKIILDAAEGLSYLHHDSVPPIVHRDIKSNNILIDGDYGARVADFGVAKAVDLTGKAPKSMSVIAGSCGYIAPEYAYTLRVNEKSDIYSFGVVILEIVTRKRPVDPELGEKDLVKWVCSTLDQKGIEHVIDPKLDSCFKEEISKILNVGLLCTSPLPINRPSMRRVVKMLQEIGGGDEDSLHKIRDDKDGKLTPYYNEDTSDQGSIA</sequence>
<proteinExistence type="evidence at protein level"/>
<organism>
    <name type="scientific">Arabidopsis thaliana</name>
    <name type="common">Mouse-ear cress</name>
    <dbReference type="NCBI Taxonomy" id="3702"/>
    <lineage>
        <taxon>Eukaryota</taxon>
        <taxon>Viridiplantae</taxon>
        <taxon>Streptophyta</taxon>
        <taxon>Embryophyta</taxon>
        <taxon>Tracheophyta</taxon>
        <taxon>Spermatophyta</taxon>
        <taxon>Magnoliopsida</taxon>
        <taxon>eudicotyledons</taxon>
        <taxon>Gunneridae</taxon>
        <taxon>Pentapetalae</taxon>
        <taxon>rosids</taxon>
        <taxon>malvids</taxon>
        <taxon>Brassicales</taxon>
        <taxon>Brassicaceae</taxon>
        <taxon>Camelineae</taxon>
        <taxon>Arabidopsis</taxon>
    </lineage>
</organism>
<name>HSL1_ARATH</name>
<feature type="signal peptide" evidence="4">
    <location>
        <begin position="1"/>
        <end position="15"/>
    </location>
</feature>
<feature type="chain" id="PRO_0000383586" description="Receptor-like protein kinase HSL1">
    <location>
        <begin position="16"/>
        <end position="996"/>
    </location>
</feature>
<feature type="topological domain" description="Extracellular" evidence="4">
    <location>
        <begin position="16"/>
        <end position="618"/>
    </location>
</feature>
<feature type="transmembrane region" description="Helical" evidence="4">
    <location>
        <begin position="619"/>
        <end position="639"/>
    </location>
</feature>
<feature type="topological domain" description="Cytoplasmic" evidence="4">
    <location>
        <begin position="640"/>
        <end position="996"/>
    </location>
</feature>
<feature type="repeat" description="LRR 1">
    <location>
        <begin position="59"/>
        <end position="83"/>
    </location>
</feature>
<feature type="repeat" description="LRR 2">
    <location>
        <begin position="84"/>
        <end position="107"/>
    </location>
</feature>
<feature type="repeat" description="LRR 3">
    <location>
        <begin position="109"/>
        <end position="131"/>
    </location>
</feature>
<feature type="repeat" description="LRR 4">
    <location>
        <begin position="133"/>
        <end position="154"/>
    </location>
</feature>
<feature type="repeat" description="LRR 5">
    <location>
        <begin position="155"/>
        <end position="178"/>
    </location>
</feature>
<feature type="repeat" description="LRR 6">
    <location>
        <begin position="179"/>
        <end position="203"/>
    </location>
</feature>
<feature type="repeat" description="LRR 7">
    <location>
        <begin position="205"/>
        <end position="228"/>
    </location>
</feature>
<feature type="repeat" description="LRR 8">
    <location>
        <begin position="229"/>
        <end position="252"/>
    </location>
</feature>
<feature type="repeat" description="LRR 9">
    <location>
        <begin position="253"/>
        <end position="276"/>
    </location>
</feature>
<feature type="repeat" description="LRR 10">
    <location>
        <begin position="278"/>
        <end position="299"/>
    </location>
</feature>
<feature type="repeat" description="LRR 11">
    <location>
        <begin position="300"/>
        <end position="323"/>
    </location>
</feature>
<feature type="repeat" description="LRR 12">
    <location>
        <begin position="325"/>
        <end position="347"/>
    </location>
</feature>
<feature type="repeat" description="LRR 13">
    <location>
        <begin position="348"/>
        <end position="371"/>
    </location>
</feature>
<feature type="repeat" description="LRR 14">
    <location>
        <begin position="373"/>
        <end position="395"/>
    </location>
</feature>
<feature type="repeat" description="LRR 15">
    <location>
        <begin position="396"/>
        <end position="419"/>
    </location>
</feature>
<feature type="repeat" description="LRR 16">
    <location>
        <begin position="421"/>
        <end position="443"/>
    </location>
</feature>
<feature type="repeat" description="LRR 17">
    <location>
        <begin position="444"/>
        <end position="467"/>
    </location>
</feature>
<feature type="repeat" description="LRR 18">
    <location>
        <begin position="468"/>
        <end position="491"/>
    </location>
</feature>
<feature type="repeat" description="LRR 19">
    <location>
        <begin position="493"/>
        <end position="515"/>
    </location>
</feature>
<feature type="repeat" description="LRR 20">
    <location>
        <begin position="516"/>
        <end position="539"/>
    </location>
</feature>
<feature type="repeat" description="LRR 21">
    <location>
        <begin position="541"/>
        <end position="562"/>
    </location>
</feature>
<feature type="repeat" description="LRR 22">
    <location>
        <begin position="563"/>
        <end position="586"/>
    </location>
</feature>
<feature type="domain" description="Protein kinase" evidence="5">
    <location>
        <begin position="676"/>
        <end position="962"/>
    </location>
</feature>
<feature type="region of interest" description="Disordered" evidence="7">
    <location>
        <begin position="967"/>
        <end position="996"/>
    </location>
</feature>
<feature type="compositionally biased region" description="Basic and acidic residues" evidence="7">
    <location>
        <begin position="968"/>
        <end position="980"/>
    </location>
</feature>
<feature type="active site" description="Proton acceptor" evidence="5 6">
    <location>
        <position position="815"/>
    </location>
</feature>
<feature type="binding site" evidence="5">
    <location>
        <begin position="682"/>
        <end position="690"/>
    </location>
    <ligand>
        <name>ATP</name>
        <dbReference type="ChEBI" id="CHEBI:30616"/>
    </ligand>
</feature>
<feature type="binding site" evidence="5">
    <location>
        <position position="704"/>
    </location>
    <ligand>
        <name>ATP</name>
        <dbReference type="ChEBI" id="CHEBI:30616"/>
    </ligand>
</feature>
<feature type="modified residue" description="Phosphotyrosine" evidence="2">
    <location>
        <position position="764"/>
    </location>
</feature>
<feature type="modified residue" description="Phosphotyrosine" evidence="1">
    <location>
        <position position="802"/>
    </location>
</feature>
<feature type="modified residue" description="Phosphoserine" evidence="3">
    <location>
        <position position="851"/>
    </location>
</feature>
<feature type="modified residue" description="Phosphotyrosine" evidence="1">
    <location>
        <position position="859"/>
    </location>
</feature>
<feature type="modified residue" description="Phosphotyrosine" evidence="3">
    <location>
        <position position="866"/>
    </location>
</feature>
<feature type="modified residue" description="Phosphothreonine" evidence="3">
    <location>
        <position position="867"/>
    </location>
</feature>
<feature type="glycosylation site" description="N-linked (GlcNAc...) asparagine" evidence="4">
    <location>
        <position position="93"/>
    </location>
</feature>
<feature type="glycosylation site" description="N-linked (GlcNAc...) asparagine" evidence="4">
    <location>
        <position position="97"/>
    </location>
</feature>
<feature type="glycosylation site" description="N-linked (GlcNAc...) asparagine" evidence="4">
    <location>
        <position position="143"/>
    </location>
</feature>
<feature type="glycosylation site" description="N-linked (GlcNAc...) asparagine" evidence="4">
    <location>
        <position position="178"/>
    </location>
</feature>
<feature type="glycosylation site" description="N-linked (GlcNAc...) asparagine" evidence="4">
    <location>
        <position position="186"/>
    </location>
</feature>
<feature type="glycosylation site" description="N-linked (GlcNAc...) asparagine" evidence="4">
    <location>
        <position position="203"/>
    </location>
</feature>
<feature type="glycosylation site" description="N-linked (GlcNAc...) asparagine" evidence="4">
    <location>
        <position position="262"/>
    </location>
</feature>
<feature type="glycosylation site" description="N-linked (GlcNAc...) asparagine" evidence="4">
    <location>
        <position position="429"/>
    </location>
</feature>
<feature type="glycosylation site" description="N-linked (GlcNAc...) asparagine" evidence="4">
    <location>
        <position position="445"/>
    </location>
</feature>
<feature type="glycosylation site" description="N-linked (GlcNAc...) asparagine" evidence="4">
    <location>
        <position position="569"/>
    </location>
</feature>
<dbReference type="EC" id="2.7.11.1"/>
<dbReference type="EMBL" id="AC010155">
    <property type="protein sequence ID" value="AAF16764.1"/>
    <property type="molecule type" value="Genomic_DNA"/>
</dbReference>
<dbReference type="EMBL" id="CP002684">
    <property type="protein sequence ID" value="AEE30977.1"/>
    <property type="molecule type" value="Genomic_DNA"/>
</dbReference>
<dbReference type="EMBL" id="AY093235">
    <property type="protein sequence ID" value="AAM13234.1"/>
    <property type="molecule type" value="mRNA"/>
</dbReference>
<dbReference type="EMBL" id="BT008808">
    <property type="protein sequence ID" value="AAP68247.1"/>
    <property type="molecule type" value="mRNA"/>
</dbReference>
<dbReference type="EMBL" id="AK227198">
    <property type="protein sequence ID" value="BAE99237.1"/>
    <property type="molecule type" value="mRNA"/>
</dbReference>
<dbReference type="EMBL" id="FJ708639">
    <property type="protein sequence ID" value="ACN59235.1"/>
    <property type="molecule type" value="mRNA"/>
</dbReference>
<dbReference type="PIR" id="F86410">
    <property type="entry name" value="F86410"/>
</dbReference>
<dbReference type="RefSeq" id="NP_174166.1">
    <property type="nucleotide sequence ID" value="NM_102612.4"/>
</dbReference>
<dbReference type="PDB" id="7ODK">
    <property type="method" value="X-ray"/>
    <property type="resolution" value="1.83 A"/>
    <property type="chains" value="AAA/BBB=17-618"/>
</dbReference>
<dbReference type="PDB" id="7ODV">
    <property type="method" value="X-ray"/>
    <property type="resolution" value="2.31 A"/>
    <property type="chains" value="AAA/DDD=17-618"/>
</dbReference>
<dbReference type="PDB" id="7OGO">
    <property type="method" value="X-ray"/>
    <property type="resolution" value="2.38 A"/>
    <property type="chains" value="AAA/DDD=17-618"/>
</dbReference>
<dbReference type="PDB" id="7OGQ">
    <property type="method" value="X-ray"/>
    <property type="resolution" value="2.20 A"/>
    <property type="chains" value="AAA=17-618"/>
</dbReference>
<dbReference type="PDB" id="7OGU">
    <property type="method" value="X-ray"/>
    <property type="resolution" value="2.87 A"/>
    <property type="chains" value="AAA/DDD/GGG/JJJ=17-618"/>
</dbReference>
<dbReference type="PDB" id="7OGZ">
    <property type="method" value="X-ray"/>
    <property type="resolution" value="2.70 A"/>
    <property type="chains" value="AAA/DDD=17-618"/>
</dbReference>
<dbReference type="PDBsum" id="7ODK"/>
<dbReference type="PDBsum" id="7ODV"/>
<dbReference type="PDBsum" id="7OGO"/>
<dbReference type="PDBsum" id="7OGQ"/>
<dbReference type="PDBsum" id="7OGU"/>
<dbReference type="PDBsum" id="7OGZ"/>
<dbReference type="SMR" id="Q9SGP2"/>
<dbReference type="FunCoup" id="Q9SGP2">
    <property type="interactions" value="1635"/>
</dbReference>
<dbReference type="STRING" id="3702.Q9SGP2"/>
<dbReference type="GlyCosmos" id="Q9SGP2">
    <property type="glycosylation" value="10 sites, No reported glycans"/>
</dbReference>
<dbReference type="GlyGen" id="Q9SGP2">
    <property type="glycosylation" value="10 sites"/>
</dbReference>
<dbReference type="iPTMnet" id="Q9SGP2"/>
<dbReference type="PaxDb" id="3702-AT1G28440.1"/>
<dbReference type="ProteomicsDB" id="232131"/>
<dbReference type="EnsemblPlants" id="AT1G28440.1">
    <property type="protein sequence ID" value="AT1G28440.1"/>
    <property type="gene ID" value="AT1G28440"/>
</dbReference>
<dbReference type="GeneID" id="839742"/>
<dbReference type="Gramene" id="AT1G28440.1">
    <property type="protein sequence ID" value="AT1G28440.1"/>
    <property type="gene ID" value="AT1G28440"/>
</dbReference>
<dbReference type="KEGG" id="ath:AT1G28440"/>
<dbReference type="Araport" id="AT1G28440"/>
<dbReference type="TAIR" id="AT1G28440">
    <property type="gene designation" value="HSL1"/>
</dbReference>
<dbReference type="eggNOG" id="ENOG502QQFB">
    <property type="taxonomic scope" value="Eukaryota"/>
</dbReference>
<dbReference type="HOGENOM" id="CLU_000288_22_1_1"/>
<dbReference type="InParanoid" id="Q9SGP2"/>
<dbReference type="OMA" id="GWFYWRY"/>
<dbReference type="OrthoDB" id="2021138at2759"/>
<dbReference type="PhylomeDB" id="Q9SGP2"/>
<dbReference type="PRO" id="PR:Q9SGP2"/>
<dbReference type="Proteomes" id="UP000006548">
    <property type="component" value="Chromosome 1"/>
</dbReference>
<dbReference type="ExpressionAtlas" id="Q9SGP2">
    <property type="expression patterns" value="baseline and differential"/>
</dbReference>
<dbReference type="GO" id="GO:0005886">
    <property type="term" value="C:plasma membrane"/>
    <property type="evidence" value="ECO:0007669"/>
    <property type="project" value="UniProtKB-SubCell"/>
</dbReference>
<dbReference type="GO" id="GO:0005524">
    <property type="term" value="F:ATP binding"/>
    <property type="evidence" value="ECO:0007669"/>
    <property type="project" value="UniProtKB-KW"/>
</dbReference>
<dbReference type="GO" id="GO:0106310">
    <property type="term" value="F:protein serine kinase activity"/>
    <property type="evidence" value="ECO:0007669"/>
    <property type="project" value="RHEA"/>
</dbReference>
<dbReference type="GO" id="GO:0004674">
    <property type="term" value="F:protein serine/threonine kinase activity"/>
    <property type="evidence" value="ECO:0007669"/>
    <property type="project" value="UniProtKB-KW"/>
</dbReference>
<dbReference type="FunFam" id="3.80.10.10:FF:000453">
    <property type="entry name" value="Leucine-rich receptor-like protein kinase family protein"/>
    <property type="match status" value="1"/>
</dbReference>
<dbReference type="FunFam" id="1.10.510.10:FF:000201">
    <property type="entry name" value="Leucine-rich repeat receptor-like serine/threonine-protein kinase"/>
    <property type="match status" value="1"/>
</dbReference>
<dbReference type="FunFam" id="3.80.10.10:FF:000077">
    <property type="entry name" value="LRR receptor-like serine/threonine-protein kinase ERL1"/>
    <property type="match status" value="1"/>
</dbReference>
<dbReference type="FunFam" id="3.30.200.20:FF:000711">
    <property type="entry name" value="Receptor-like protein kinase HSL1"/>
    <property type="match status" value="1"/>
</dbReference>
<dbReference type="FunFam" id="3.80.10.10:FF:000215">
    <property type="entry name" value="Receptor-like protein kinase HSL1"/>
    <property type="match status" value="1"/>
</dbReference>
<dbReference type="Gene3D" id="3.30.200.20">
    <property type="entry name" value="Phosphorylase Kinase, domain 1"/>
    <property type="match status" value="1"/>
</dbReference>
<dbReference type="Gene3D" id="3.80.10.10">
    <property type="entry name" value="Ribonuclease Inhibitor"/>
    <property type="match status" value="4"/>
</dbReference>
<dbReference type="Gene3D" id="1.10.510.10">
    <property type="entry name" value="Transferase(Phosphotransferase) domain 1"/>
    <property type="match status" value="1"/>
</dbReference>
<dbReference type="InterPro" id="IPR011009">
    <property type="entry name" value="Kinase-like_dom_sf"/>
</dbReference>
<dbReference type="InterPro" id="IPR001611">
    <property type="entry name" value="Leu-rich_rpt"/>
</dbReference>
<dbReference type="InterPro" id="IPR032675">
    <property type="entry name" value="LRR_dom_sf"/>
</dbReference>
<dbReference type="InterPro" id="IPR013210">
    <property type="entry name" value="LRR_N_plant-typ"/>
</dbReference>
<dbReference type="InterPro" id="IPR050647">
    <property type="entry name" value="Plant_LRR-RLKs"/>
</dbReference>
<dbReference type="InterPro" id="IPR000719">
    <property type="entry name" value="Prot_kinase_dom"/>
</dbReference>
<dbReference type="InterPro" id="IPR017441">
    <property type="entry name" value="Protein_kinase_ATP_BS"/>
</dbReference>
<dbReference type="InterPro" id="IPR008271">
    <property type="entry name" value="Ser/Thr_kinase_AS"/>
</dbReference>
<dbReference type="PANTHER" id="PTHR48056">
    <property type="entry name" value="LRR RECEPTOR-LIKE SERINE/THREONINE-PROTEIN KINASE-RELATED"/>
    <property type="match status" value="1"/>
</dbReference>
<dbReference type="PANTHER" id="PTHR48056:SF15">
    <property type="entry name" value="RECEPTOR-LIKE PROTEIN KINASE HSL1"/>
    <property type="match status" value="1"/>
</dbReference>
<dbReference type="Pfam" id="PF00560">
    <property type="entry name" value="LRR_1"/>
    <property type="match status" value="8"/>
</dbReference>
<dbReference type="Pfam" id="PF13855">
    <property type="entry name" value="LRR_8"/>
    <property type="match status" value="3"/>
</dbReference>
<dbReference type="Pfam" id="PF08263">
    <property type="entry name" value="LRRNT_2"/>
    <property type="match status" value="1"/>
</dbReference>
<dbReference type="Pfam" id="PF00069">
    <property type="entry name" value="Pkinase"/>
    <property type="match status" value="1"/>
</dbReference>
<dbReference type="SMART" id="SM00220">
    <property type="entry name" value="S_TKc"/>
    <property type="match status" value="1"/>
</dbReference>
<dbReference type="SUPFAM" id="SSF52058">
    <property type="entry name" value="L domain-like"/>
    <property type="match status" value="1"/>
</dbReference>
<dbReference type="SUPFAM" id="SSF56112">
    <property type="entry name" value="Protein kinase-like (PK-like)"/>
    <property type="match status" value="1"/>
</dbReference>
<dbReference type="SUPFAM" id="SSF52047">
    <property type="entry name" value="RNI-like"/>
    <property type="match status" value="1"/>
</dbReference>
<dbReference type="PROSITE" id="PS00107">
    <property type="entry name" value="PROTEIN_KINASE_ATP"/>
    <property type="match status" value="1"/>
</dbReference>
<dbReference type="PROSITE" id="PS50011">
    <property type="entry name" value="PROTEIN_KINASE_DOM"/>
    <property type="match status" value="1"/>
</dbReference>
<dbReference type="PROSITE" id="PS00108">
    <property type="entry name" value="PROTEIN_KINASE_ST"/>
    <property type="match status" value="1"/>
</dbReference>
<protein>
    <recommendedName>
        <fullName>Receptor-like protein kinase HSL1</fullName>
        <ecNumber>2.7.11.1</ecNumber>
    </recommendedName>
    <alternativeName>
        <fullName>Protein HAESA-LIKE1</fullName>
    </alternativeName>
</protein>